<keyword id="KW-0158">Chromosome</keyword>
<keyword id="KW-0217">Developmental protein</keyword>
<keyword id="KW-0221">Differentiation</keyword>
<keyword id="KW-0226">DNA condensation</keyword>
<keyword id="KW-0238">DNA-binding</keyword>
<keyword id="KW-0544">Nucleosome core</keyword>
<keyword id="KW-0539">Nucleus</keyword>
<keyword id="KW-0744">Spermatogenesis</keyword>
<dbReference type="EMBL" id="AF435927">
    <property type="protein sequence ID" value="AAL35561.1"/>
    <property type="molecule type" value="Genomic_DNA"/>
</dbReference>
<dbReference type="Proteomes" id="UP000694923">
    <property type="component" value="Unplaced"/>
</dbReference>
<dbReference type="GO" id="GO:0000786">
    <property type="term" value="C:nucleosome"/>
    <property type="evidence" value="ECO:0007669"/>
    <property type="project" value="UniProtKB-KW"/>
</dbReference>
<dbReference type="GO" id="GO:0005634">
    <property type="term" value="C:nucleus"/>
    <property type="evidence" value="ECO:0007669"/>
    <property type="project" value="UniProtKB-SubCell"/>
</dbReference>
<dbReference type="GO" id="GO:0003677">
    <property type="term" value="F:DNA binding"/>
    <property type="evidence" value="ECO:0007669"/>
    <property type="project" value="UniProtKB-KW"/>
</dbReference>
<dbReference type="GO" id="GO:0030154">
    <property type="term" value="P:cell differentiation"/>
    <property type="evidence" value="ECO:0007669"/>
    <property type="project" value="UniProtKB-KW"/>
</dbReference>
<dbReference type="GO" id="GO:0030261">
    <property type="term" value="P:chromosome condensation"/>
    <property type="evidence" value="ECO:0007669"/>
    <property type="project" value="UniProtKB-KW"/>
</dbReference>
<dbReference type="GO" id="GO:0007283">
    <property type="term" value="P:spermatogenesis"/>
    <property type="evidence" value="ECO:0007669"/>
    <property type="project" value="UniProtKB-KW"/>
</dbReference>
<reference key="1">
    <citation type="journal article" date="2002" name="Mol. Phylogenet. Evol.">
        <title>Characterization and phylogenetic utility of the mammalian protamine P1 gene.</title>
        <authorList>
            <person name="Van Den Bussche R.A."/>
            <person name="Hoofer S.R."/>
            <person name="Hansen E.W."/>
        </authorList>
    </citation>
    <scope>NUCLEOTIDE SEQUENCE [GENOMIC DNA]</scope>
</reference>
<comment type="function">
    <text evidence="1">Protamines substitute for histones in the chromatin of sperm during the haploid phase of spermatogenesis. They compact sperm DNA into a highly condensed, stable and inactive complex (By similarity).</text>
</comment>
<comment type="subcellular location">
    <subcellularLocation>
        <location evidence="1">Nucleus</location>
    </subcellularLocation>
    <subcellularLocation>
        <location evidence="1">Chromosome</location>
    </subcellularLocation>
</comment>
<comment type="tissue specificity">
    <text>Testis.</text>
</comment>
<comment type="similarity">
    <text evidence="2">Belongs to the protamine P1 family.</text>
</comment>
<evidence type="ECO:0000250" key="1"/>
<evidence type="ECO:0000305" key="2"/>
<feature type="chain" id="PRO_0000191458" description="Sperm protamine P1">
    <location>
        <begin position="1"/>
        <end position="47"/>
    </location>
</feature>
<gene>
    <name type="primary">PRM1</name>
</gene>
<organism>
    <name type="scientific">Galeopterus variegatus</name>
    <name type="common">Malayan flying lemur</name>
    <name type="synonym">Cynocephalus variegatus</name>
    <dbReference type="NCBI Taxonomy" id="482537"/>
    <lineage>
        <taxon>Eukaryota</taxon>
        <taxon>Metazoa</taxon>
        <taxon>Chordata</taxon>
        <taxon>Craniata</taxon>
        <taxon>Vertebrata</taxon>
        <taxon>Euteleostomi</taxon>
        <taxon>Mammalia</taxon>
        <taxon>Eutheria</taxon>
        <taxon>Euarchontoglires</taxon>
        <taxon>Dermoptera</taxon>
        <taxon>Cynocephalidae</taxon>
        <taxon>Galeopterus</taxon>
    </lineage>
</organism>
<protein>
    <recommendedName>
        <fullName>Sperm protamine P1</fullName>
    </recommendedName>
</protein>
<accession>Q8WP00</accession>
<name>HSP1_GALVR</name>
<sequence length="47" mass="6372">MARYRCCRSRSRCRRRRRSCRRRRRCRRRRARRSCRRRYSLRCCRRY</sequence>
<proteinExistence type="evidence at transcript level"/>